<keyword id="KW-1003">Cell membrane</keyword>
<keyword id="KW-0472">Membrane</keyword>
<keyword id="KW-1185">Reference proteome</keyword>
<keyword id="KW-0812">Transmembrane</keyword>
<keyword id="KW-1133">Transmembrane helix</keyword>
<feature type="chain" id="PRO_0000412009" description="CASP-like protein 1E1">
    <location>
        <begin position="1"/>
        <end position="190"/>
    </location>
</feature>
<feature type="topological domain" description="Cytoplasmic" evidence="2">
    <location>
        <begin position="1"/>
        <end position="28"/>
    </location>
</feature>
<feature type="transmembrane region" description="Helical" evidence="2">
    <location>
        <begin position="29"/>
        <end position="49"/>
    </location>
</feature>
<feature type="topological domain" description="Extracellular" evidence="2">
    <location>
        <begin position="50"/>
        <end position="83"/>
    </location>
</feature>
<feature type="transmembrane region" description="Helical" evidence="2">
    <location>
        <begin position="84"/>
        <end position="104"/>
    </location>
</feature>
<feature type="topological domain" description="Cytoplasmic" evidence="2">
    <location>
        <begin position="105"/>
        <end position="111"/>
    </location>
</feature>
<feature type="transmembrane region" description="Helical" evidence="2">
    <location>
        <begin position="112"/>
        <end position="132"/>
    </location>
</feature>
<feature type="topological domain" description="Extracellular" evidence="2">
    <location>
        <begin position="133"/>
        <end position="163"/>
    </location>
</feature>
<feature type="transmembrane region" description="Helical" evidence="2">
    <location>
        <begin position="164"/>
        <end position="184"/>
    </location>
</feature>
<feature type="topological domain" description="Cytoplasmic" evidence="2">
    <location>
        <begin position="185"/>
        <end position="190"/>
    </location>
</feature>
<feature type="region of interest" description="Disordered" evidence="3">
    <location>
        <begin position="1"/>
        <end position="21"/>
    </location>
</feature>
<organism>
    <name type="scientific">Arabidopsis lyrata subsp. lyrata</name>
    <name type="common">Lyre-leaved rock-cress</name>
    <dbReference type="NCBI Taxonomy" id="81972"/>
    <lineage>
        <taxon>Eukaryota</taxon>
        <taxon>Viridiplantae</taxon>
        <taxon>Streptophyta</taxon>
        <taxon>Embryophyta</taxon>
        <taxon>Tracheophyta</taxon>
        <taxon>Spermatophyta</taxon>
        <taxon>Magnoliopsida</taxon>
        <taxon>eudicotyledons</taxon>
        <taxon>Gunneridae</taxon>
        <taxon>Pentapetalae</taxon>
        <taxon>rosids</taxon>
        <taxon>malvids</taxon>
        <taxon>Brassicales</taxon>
        <taxon>Brassicaceae</taxon>
        <taxon>Camelineae</taxon>
        <taxon>Arabidopsis</taxon>
    </lineage>
</organism>
<accession>D7MAF5</accession>
<comment type="subunit">
    <text evidence="1">Homodimer and heterodimers.</text>
</comment>
<comment type="subcellular location">
    <subcellularLocation>
        <location evidence="1">Cell membrane</location>
        <topology evidence="1">Multi-pass membrane protein</topology>
    </subcellularLocation>
</comment>
<comment type="similarity">
    <text evidence="4">Belongs to the Casparian strip membrane proteins (CASP) family.</text>
</comment>
<evidence type="ECO:0000250" key="1"/>
<evidence type="ECO:0000255" key="2"/>
<evidence type="ECO:0000256" key="3">
    <source>
        <dbReference type="SAM" id="MobiDB-lite"/>
    </source>
</evidence>
<evidence type="ECO:0000305" key="4"/>
<reference key="1">
    <citation type="journal article" date="2011" name="Nat. Genet.">
        <title>The Arabidopsis lyrata genome sequence and the basis of rapid genome size change.</title>
        <authorList>
            <person name="Hu T.T."/>
            <person name="Pattyn P."/>
            <person name="Bakker E.G."/>
            <person name="Cao J."/>
            <person name="Cheng J.-F."/>
            <person name="Clark R.M."/>
            <person name="Fahlgren N."/>
            <person name="Fawcett J.A."/>
            <person name="Grimwood J."/>
            <person name="Gundlach H."/>
            <person name="Haberer G."/>
            <person name="Hollister J.D."/>
            <person name="Ossowski S."/>
            <person name="Ottilar R.P."/>
            <person name="Salamov A.A."/>
            <person name="Schneeberger K."/>
            <person name="Spannagl M."/>
            <person name="Wang X."/>
            <person name="Yang L."/>
            <person name="Nasrallah M.E."/>
            <person name="Bergelson J."/>
            <person name="Carrington J.C."/>
            <person name="Gaut B.S."/>
            <person name="Schmutz J."/>
            <person name="Mayer K.F.X."/>
            <person name="Van de Peer Y."/>
            <person name="Grigoriev I.V."/>
            <person name="Nordborg M."/>
            <person name="Weigel D."/>
            <person name="Guo Y.-L."/>
        </authorList>
    </citation>
    <scope>NUCLEOTIDE SEQUENCE [LARGE SCALE GENOMIC DNA]</scope>
    <source>
        <strain>cv. MN47</strain>
    </source>
</reference>
<reference key="2">
    <citation type="journal article" date="2014" name="Plant Physiol.">
        <title>Functional and evolutionary analysis of the CASPARIAN STRIP MEMBRANE DOMAIN PROTEIN family.</title>
        <authorList>
            <person name="Roppolo D."/>
            <person name="Boeckmann B."/>
            <person name="Pfister A."/>
            <person name="Boutet E."/>
            <person name="Rubio M.C."/>
            <person name="Denervaud-Tendon V."/>
            <person name="Vermeer J.E."/>
            <person name="Gheyselinck J."/>
            <person name="Xenarios I."/>
            <person name="Geldner N."/>
        </authorList>
    </citation>
    <scope>GENE FAMILY</scope>
    <scope>NOMENCLATURE</scope>
</reference>
<sequence>MEHESKTKMDGIEMEKGKKENGSRKGVEITMRVLALVLTMVAATVLGVAKQTEVVPIKLIPTLPPLNVATTAKASYLSAFVYNICANAIACGYTAISIMIVIISKGRRSKCLLMAVLIGDLMMVALLCSSTGAAGAIGLMGRHGNKHVMWKKVCGVFGKFCNQAAVSVAITLIASVVFMLLVVLDALKLP</sequence>
<dbReference type="EMBL" id="GL348719">
    <property type="protein sequence ID" value="EFH46483.1"/>
    <property type="molecule type" value="Genomic_DNA"/>
</dbReference>
<dbReference type="SMR" id="D7MAF5"/>
<dbReference type="STRING" id="81972.D7MAF5"/>
<dbReference type="EnsemblPlants" id="fgenesh2_kg.7__2755__AT4G15630.1">
    <property type="protein sequence ID" value="fgenesh2_kg.7__2755__AT4G15630.1"/>
    <property type="gene ID" value="fgenesh2_kg.7__2755__AT4G15630.1"/>
</dbReference>
<dbReference type="Gramene" id="fgenesh2_kg.7__2755__AT4G15630.1">
    <property type="protein sequence ID" value="fgenesh2_kg.7__2755__AT4G15630.1"/>
    <property type="gene ID" value="fgenesh2_kg.7__2755__AT4G15630.1"/>
</dbReference>
<dbReference type="KEGG" id="aly:9304266"/>
<dbReference type="eggNOG" id="ENOG502RZNK">
    <property type="taxonomic scope" value="Eukaryota"/>
</dbReference>
<dbReference type="HOGENOM" id="CLU_066104_1_0_1"/>
<dbReference type="OrthoDB" id="1898688at2759"/>
<dbReference type="Proteomes" id="UP000008694">
    <property type="component" value="Unassembled WGS sequence"/>
</dbReference>
<dbReference type="GO" id="GO:0005886">
    <property type="term" value="C:plasma membrane"/>
    <property type="evidence" value="ECO:0007669"/>
    <property type="project" value="UniProtKB-SubCell"/>
</dbReference>
<dbReference type="GO" id="GO:0043424">
    <property type="term" value="F:protein histidine kinase binding"/>
    <property type="evidence" value="ECO:0007669"/>
    <property type="project" value="EnsemblPlants"/>
</dbReference>
<dbReference type="InterPro" id="IPR006459">
    <property type="entry name" value="CASP/CASPL"/>
</dbReference>
<dbReference type="InterPro" id="IPR006702">
    <property type="entry name" value="CASP_dom"/>
</dbReference>
<dbReference type="InterPro" id="IPR044173">
    <property type="entry name" value="CASPL"/>
</dbReference>
<dbReference type="NCBIfam" id="TIGR01569">
    <property type="entry name" value="A_tha_TIGR01569"/>
    <property type="match status" value="1"/>
</dbReference>
<dbReference type="PANTHER" id="PTHR36488">
    <property type="entry name" value="CASP-LIKE PROTEIN 1U1"/>
    <property type="match status" value="1"/>
</dbReference>
<dbReference type="PANTHER" id="PTHR36488:SF8">
    <property type="entry name" value="CASP-LIKE PROTEIN 1U1"/>
    <property type="match status" value="1"/>
</dbReference>
<dbReference type="Pfam" id="PF04535">
    <property type="entry name" value="CASP_dom"/>
    <property type="match status" value="1"/>
</dbReference>
<name>CSPLA_ARALL</name>
<gene>
    <name type="ORF">ARALYDRAFT_493322</name>
</gene>
<proteinExistence type="inferred from homology"/>
<protein>
    <recommendedName>
        <fullName>CASP-like protein 1E1</fullName>
        <shortName>AlCASPL1E1</shortName>
    </recommendedName>
</protein>